<protein>
    <recommendedName>
        <fullName evidence="2">FMN-dependent NADH:quinone oxidoreductase</fullName>
        <ecNumber evidence="2">1.6.5.-</ecNumber>
    </recommendedName>
    <alternativeName>
        <fullName evidence="2">Azo-dye reductase</fullName>
    </alternativeName>
    <alternativeName>
        <fullName evidence="2">FMN-dependent NADH-azo compound oxidoreductase</fullName>
    </alternativeName>
    <alternativeName>
        <fullName evidence="2">FMN-dependent NADH-azoreductase</fullName>
        <ecNumber evidence="2">1.7.1.17</ecNumber>
    </alternativeName>
</protein>
<sequence>MSKVLVLKSSILAGYSQSNQLSDYFVEQWSEKHSADEITVRDLAANPIPVLDGELVGALRPSDAPLTPRQQEALALSDELIAELKAHDVIVIAAPMYNFNISTQLKNYFDLVARAGVTFRYTENGPEGLVTGKKAIVITSRGGIHKDGPTDLVTPYLSTFLGFIGITDVKFVFAEGIAYGPEMAAKAQSDAKAAIDSIVAA</sequence>
<name>AZOR_SHIFL</name>
<keyword id="KW-0285">Flavoprotein</keyword>
<keyword id="KW-0288">FMN</keyword>
<keyword id="KW-0520">NAD</keyword>
<keyword id="KW-0560">Oxidoreductase</keyword>
<keyword id="KW-1185">Reference proteome</keyword>
<accession>Q83R81</accession>
<reference key="1">
    <citation type="journal article" date="2002" name="Nucleic Acids Res.">
        <title>Genome sequence of Shigella flexneri 2a: insights into pathogenicity through comparison with genomes of Escherichia coli K12 and O157.</title>
        <authorList>
            <person name="Jin Q."/>
            <person name="Yuan Z."/>
            <person name="Xu J."/>
            <person name="Wang Y."/>
            <person name="Shen Y."/>
            <person name="Lu W."/>
            <person name="Wang J."/>
            <person name="Liu H."/>
            <person name="Yang J."/>
            <person name="Yang F."/>
            <person name="Zhang X."/>
            <person name="Zhang J."/>
            <person name="Yang G."/>
            <person name="Wu H."/>
            <person name="Qu D."/>
            <person name="Dong J."/>
            <person name="Sun L."/>
            <person name="Xue Y."/>
            <person name="Zhao A."/>
            <person name="Gao Y."/>
            <person name="Zhu J."/>
            <person name="Kan B."/>
            <person name="Ding K."/>
            <person name="Chen S."/>
            <person name="Cheng H."/>
            <person name="Yao Z."/>
            <person name="He B."/>
            <person name="Chen R."/>
            <person name="Ma D."/>
            <person name="Qiang B."/>
            <person name="Wen Y."/>
            <person name="Hou Y."/>
            <person name="Yu J."/>
        </authorList>
    </citation>
    <scope>NUCLEOTIDE SEQUENCE [LARGE SCALE GENOMIC DNA]</scope>
    <source>
        <strain>301 / Serotype 2a</strain>
    </source>
</reference>
<reference key="2">
    <citation type="journal article" date="2003" name="Infect. Immun.">
        <title>Complete genome sequence and comparative genomics of Shigella flexneri serotype 2a strain 2457T.</title>
        <authorList>
            <person name="Wei J."/>
            <person name="Goldberg M.B."/>
            <person name="Burland V."/>
            <person name="Venkatesan M.M."/>
            <person name="Deng W."/>
            <person name="Fournier G."/>
            <person name="Mayhew G.F."/>
            <person name="Plunkett G. III"/>
            <person name="Rose D.J."/>
            <person name="Darling A."/>
            <person name="Mau B."/>
            <person name="Perna N.T."/>
            <person name="Payne S.M."/>
            <person name="Runyen-Janecky L.J."/>
            <person name="Zhou S."/>
            <person name="Schwartz D.C."/>
            <person name="Blattner F.R."/>
        </authorList>
    </citation>
    <scope>NUCLEOTIDE SEQUENCE [LARGE SCALE GENOMIC DNA]</scope>
    <source>
        <strain>ATCC 700930 / 2457T / Serotype 2a</strain>
    </source>
</reference>
<dbReference type="EC" id="1.6.5.-" evidence="2"/>
<dbReference type="EC" id="1.7.1.17" evidence="2"/>
<dbReference type="EMBL" id="AE005674">
    <property type="protein sequence ID" value="AAN43371.1"/>
    <property type="molecule type" value="Genomic_DNA"/>
</dbReference>
<dbReference type="EMBL" id="AE014073">
    <property type="protein sequence ID" value="AAP16862.1"/>
    <property type="molecule type" value="Genomic_DNA"/>
</dbReference>
<dbReference type="RefSeq" id="WP_000048979.1">
    <property type="nucleotide sequence ID" value="NZ_WPGW01000175.1"/>
</dbReference>
<dbReference type="SMR" id="Q83R81"/>
<dbReference type="STRING" id="198214.SF1803"/>
<dbReference type="PaxDb" id="198214-SF1803"/>
<dbReference type="KEGG" id="sfl:SF1803"/>
<dbReference type="KEGG" id="sfx:S1471"/>
<dbReference type="PATRIC" id="fig|198214.7.peg.2141"/>
<dbReference type="HOGENOM" id="CLU_088964_0_0_6"/>
<dbReference type="Proteomes" id="UP000001006">
    <property type="component" value="Chromosome"/>
</dbReference>
<dbReference type="Proteomes" id="UP000002673">
    <property type="component" value="Chromosome"/>
</dbReference>
<dbReference type="GO" id="GO:0009055">
    <property type="term" value="F:electron transfer activity"/>
    <property type="evidence" value="ECO:0007669"/>
    <property type="project" value="UniProtKB-UniRule"/>
</dbReference>
<dbReference type="GO" id="GO:0010181">
    <property type="term" value="F:FMN binding"/>
    <property type="evidence" value="ECO:0007669"/>
    <property type="project" value="UniProtKB-UniRule"/>
</dbReference>
<dbReference type="GO" id="GO:0016652">
    <property type="term" value="F:oxidoreductase activity, acting on NAD(P)H as acceptor"/>
    <property type="evidence" value="ECO:0007669"/>
    <property type="project" value="UniProtKB-UniRule"/>
</dbReference>
<dbReference type="GO" id="GO:0016655">
    <property type="term" value="F:oxidoreductase activity, acting on NAD(P)H, quinone or similar compound as acceptor"/>
    <property type="evidence" value="ECO:0007669"/>
    <property type="project" value="InterPro"/>
</dbReference>
<dbReference type="FunFam" id="3.40.50.360:FF:000010">
    <property type="entry name" value="FMN-dependent NADH-azoreductase"/>
    <property type="match status" value="1"/>
</dbReference>
<dbReference type="Gene3D" id="3.40.50.360">
    <property type="match status" value="1"/>
</dbReference>
<dbReference type="HAMAP" id="MF_01216">
    <property type="entry name" value="Azoreductase_type1"/>
    <property type="match status" value="1"/>
</dbReference>
<dbReference type="InterPro" id="IPR003680">
    <property type="entry name" value="Flavodoxin_fold"/>
</dbReference>
<dbReference type="InterPro" id="IPR029039">
    <property type="entry name" value="Flavoprotein-like_sf"/>
</dbReference>
<dbReference type="InterPro" id="IPR050104">
    <property type="entry name" value="FMN-dep_NADH:Q_OxRdtase_AzoR1"/>
</dbReference>
<dbReference type="InterPro" id="IPR023048">
    <property type="entry name" value="NADH:quinone_OxRdtase_FMN_depd"/>
</dbReference>
<dbReference type="PANTHER" id="PTHR43741">
    <property type="entry name" value="FMN-DEPENDENT NADH-AZOREDUCTASE 1"/>
    <property type="match status" value="1"/>
</dbReference>
<dbReference type="PANTHER" id="PTHR43741:SF2">
    <property type="entry name" value="FMN-DEPENDENT NADH:QUINONE OXIDOREDUCTASE"/>
    <property type="match status" value="1"/>
</dbReference>
<dbReference type="Pfam" id="PF02525">
    <property type="entry name" value="Flavodoxin_2"/>
    <property type="match status" value="1"/>
</dbReference>
<dbReference type="SUPFAM" id="SSF52218">
    <property type="entry name" value="Flavoproteins"/>
    <property type="match status" value="1"/>
</dbReference>
<comment type="function">
    <text evidence="2">Quinone reductase that provides resistance to thiol-specific stress caused by electrophilic quinones.</text>
</comment>
<comment type="function">
    <text evidence="2">Also exhibits azoreductase activity. Catalyzes the reductive cleavage of the azo bond in aromatic azo compounds to the corresponding amines.</text>
</comment>
<comment type="catalytic activity">
    <reaction evidence="2">
        <text>2 a quinone + NADH + H(+) = 2 a 1,4-benzosemiquinone + NAD(+)</text>
        <dbReference type="Rhea" id="RHEA:65952"/>
        <dbReference type="ChEBI" id="CHEBI:15378"/>
        <dbReference type="ChEBI" id="CHEBI:57540"/>
        <dbReference type="ChEBI" id="CHEBI:57945"/>
        <dbReference type="ChEBI" id="CHEBI:132124"/>
        <dbReference type="ChEBI" id="CHEBI:134225"/>
    </reaction>
</comment>
<comment type="catalytic activity">
    <reaction evidence="2">
        <text>N,N-dimethyl-1,4-phenylenediamine + anthranilate + 2 NAD(+) = 2-(4-dimethylaminophenyl)diazenylbenzoate + 2 NADH + 2 H(+)</text>
        <dbReference type="Rhea" id="RHEA:55872"/>
        <dbReference type="ChEBI" id="CHEBI:15378"/>
        <dbReference type="ChEBI" id="CHEBI:15783"/>
        <dbReference type="ChEBI" id="CHEBI:16567"/>
        <dbReference type="ChEBI" id="CHEBI:57540"/>
        <dbReference type="ChEBI" id="CHEBI:57945"/>
        <dbReference type="ChEBI" id="CHEBI:71579"/>
        <dbReference type="EC" id="1.7.1.17"/>
    </reaction>
</comment>
<comment type="cofactor">
    <cofactor evidence="2">
        <name>FMN</name>
        <dbReference type="ChEBI" id="CHEBI:58210"/>
    </cofactor>
    <text evidence="2">Binds 1 FMN per subunit.</text>
</comment>
<comment type="subunit">
    <text evidence="2">Homodimer.</text>
</comment>
<comment type="similarity">
    <text evidence="2">Belongs to the azoreductase type 1 family.</text>
</comment>
<evidence type="ECO:0000250" key="1"/>
<evidence type="ECO:0000255" key="2">
    <source>
        <dbReference type="HAMAP-Rule" id="MF_01216"/>
    </source>
</evidence>
<feature type="initiator methionine" description="Removed" evidence="1">
    <location>
        <position position="1"/>
    </location>
</feature>
<feature type="chain" id="PRO_0000166317" description="FMN-dependent NADH:quinone oxidoreductase">
    <location>
        <begin position="2"/>
        <end position="201"/>
    </location>
</feature>
<feature type="binding site" evidence="2">
    <location>
        <position position="10"/>
    </location>
    <ligand>
        <name>FMN</name>
        <dbReference type="ChEBI" id="CHEBI:58210"/>
    </ligand>
</feature>
<feature type="binding site" evidence="2">
    <location>
        <begin position="16"/>
        <end position="18"/>
    </location>
    <ligand>
        <name>FMN</name>
        <dbReference type="ChEBI" id="CHEBI:58210"/>
    </ligand>
</feature>
<feature type="binding site" evidence="2">
    <location>
        <begin position="96"/>
        <end position="99"/>
    </location>
    <ligand>
        <name>FMN</name>
        <dbReference type="ChEBI" id="CHEBI:58210"/>
    </ligand>
</feature>
<feature type="binding site" evidence="2">
    <location>
        <begin position="140"/>
        <end position="143"/>
    </location>
    <ligand>
        <name>FMN</name>
        <dbReference type="ChEBI" id="CHEBI:58210"/>
    </ligand>
</feature>
<organism>
    <name type="scientific">Shigella flexneri</name>
    <dbReference type="NCBI Taxonomy" id="623"/>
    <lineage>
        <taxon>Bacteria</taxon>
        <taxon>Pseudomonadati</taxon>
        <taxon>Pseudomonadota</taxon>
        <taxon>Gammaproteobacteria</taxon>
        <taxon>Enterobacterales</taxon>
        <taxon>Enterobacteriaceae</taxon>
        <taxon>Shigella</taxon>
    </lineage>
</organism>
<gene>
    <name evidence="2" type="primary">azoR</name>
    <name type="ordered locus">SF1803</name>
    <name type="ordered locus">S1471</name>
</gene>
<proteinExistence type="inferred from homology"/>